<proteinExistence type="inferred from homology"/>
<keyword id="KW-0030">Aminoacyl-tRNA synthetase</keyword>
<keyword id="KW-0067">ATP-binding</keyword>
<keyword id="KW-0963">Cytoplasm</keyword>
<keyword id="KW-0436">Ligase</keyword>
<keyword id="KW-0547">Nucleotide-binding</keyword>
<keyword id="KW-0648">Protein biosynthesis</keyword>
<keyword id="KW-1185">Reference proteome</keyword>
<keyword id="KW-0694">RNA-binding</keyword>
<dbReference type="EC" id="6.1.1.1" evidence="1"/>
<dbReference type="EMBL" id="CP000414">
    <property type="protein sequence ID" value="ABJ63114.1"/>
    <property type="molecule type" value="Genomic_DNA"/>
</dbReference>
<dbReference type="RefSeq" id="WP_011680557.1">
    <property type="nucleotide sequence ID" value="NC_008531.1"/>
</dbReference>
<dbReference type="SMR" id="Q03UK8"/>
<dbReference type="EnsemblBacteria" id="ABJ63114">
    <property type="protein sequence ID" value="ABJ63114"/>
    <property type="gene ID" value="LEUM_2044"/>
</dbReference>
<dbReference type="GeneID" id="29577166"/>
<dbReference type="KEGG" id="lme:LEUM_2044"/>
<dbReference type="eggNOG" id="COG0162">
    <property type="taxonomic scope" value="Bacteria"/>
</dbReference>
<dbReference type="HOGENOM" id="CLU_024003_0_3_9"/>
<dbReference type="Proteomes" id="UP000000362">
    <property type="component" value="Chromosome"/>
</dbReference>
<dbReference type="GO" id="GO:0005829">
    <property type="term" value="C:cytosol"/>
    <property type="evidence" value="ECO:0007669"/>
    <property type="project" value="TreeGrafter"/>
</dbReference>
<dbReference type="GO" id="GO:0005524">
    <property type="term" value="F:ATP binding"/>
    <property type="evidence" value="ECO:0007669"/>
    <property type="project" value="UniProtKB-UniRule"/>
</dbReference>
<dbReference type="GO" id="GO:0003723">
    <property type="term" value="F:RNA binding"/>
    <property type="evidence" value="ECO:0007669"/>
    <property type="project" value="UniProtKB-KW"/>
</dbReference>
<dbReference type="GO" id="GO:0004831">
    <property type="term" value="F:tyrosine-tRNA ligase activity"/>
    <property type="evidence" value="ECO:0007669"/>
    <property type="project" value="UniProtKB-UniRule"/>
</dbReference>
<dbReference type="GO" id="GO:0006437">
    <property type="term" value="P:tyrosyl-tRNA aminoacylation"/>
    <property type="evidence" value="ECO:0007669"/>
    <property type="project" value="UniProtKB-UniRule"/>
</dbReference>
<dbReference type="CDD" id="cd00805">
    <property type="entry name" value="TyrRS_core"/>
    <property type="match status" value="1"/>
</dbReference>
<dbReference type="FunFam" id="1.10.240.10:FF:000001">
    <property type="entry name" value="Tyrosine--tRNA ligase"/>
    <property type="match status" value="1"/>
</dbReference>
<dbReference type="Gene3D" id="3.40.50.620">
    <property type="entry name" value="HUPs"/>
    <property type="match status" value="1"/>
</dbReference>
<dbReference type="Gene3D" id="3.10.290.10">
    <property type="entry name" value="RNA-binding S4 domain"/>
    <property type="match status" value="1"/>
</dbReference>
<dbReference type="Gene3D" id="1.10.240.10">
    <property type="entry name" value="Tyrosyl-Transfer RNA Synthetase"/>
    <property type="match status" value="1"/>
</dbReference>
<dbReference type="HAMAP" id="MF_02006">
    <property type="entry name" value="Tyr_tRNA_synth_type1"/>
    <property type="match status" value="1"/>
</dbReference>
<dbReference type="InterPro" id="IPR001412">
    <property type="entry name" value="aa-tRNA-synth_I_CS"/>
</dbReference>
<dbReference type="InterPro" id="IPR002305">
    <property type="entry name" value="aa-tRNA-synth_Ic"/>
</dbReference>
<dbReference type="InterPro" id="IPR014729">
    <property type="entry name" value="Rossmann-like_a/b/a_fold"/>
</dbReference>
<dbReference type="InterPro" id="IPR036986">
    <property type="entry name" value="S4_RNA-bd_sf"/>
</dbReference>
<dbReference type="InterPro" id="IPR054608">
    <property type="entry name" value="SYY-like_C"/>
</dbReference>
<dbReference type="InterPro" id="IPR002307">
    <property type="entry name" value="Tyr-tRNA-ligase"/>
</dbReference>
<dbReference type="InterPro" id="IPR024088">
    <property type="entry name" value="Tyr-tRNA-ligase_bac-type"/>
</dbReference>
<dbReference type="InterPro" id="IPR024107">
    <property type="entry name" value="Tyr-tRNA-ligase_bac_1"/>
</dbReference>
<dbReference type="NCBIfam" id="TIGR00234">
    <property type="entry name" value="tyrS"/>
    <property type="match status" value="1"/>
</dbReference>
<dbReference type="PANTHER" id="PTHR11766:SF0">
    <property type="entry name" value="TYROSINE--TRNA LIGASE, MITOCHONDRIAL"/>
    <property type="match status" value="1"/>
</dbReference>
<dbReference type="PANTHER" id="PTHR11766">
    <property type="entry name" value="TYROSYL-TRNA SYNTHETASE"/>
    <property type="match status" value="1"/>
</dbReference>
<dbReference type="Pfam" id="PF22421">
    <property type="entry name" value="SYY_C-terminal"/>
    <property type="match status" value="1"/>
</dbReference>
<dbReference type="Pfam" id="PF00579">
    <property type="entry name" value="tRNA-synt_1b"/>
    <property type="match status" value="1"/>
</dbReference>
<dbReference type="PRINTS" id="PR01040">
    <property type="entry name" value="TRNASYNTHTYR"/>
</dbReference>
<dbReference type="SUPFAM" id="SSF55174">
    <property type="entry name" value="Alpha-L RNA-binding motif"/>
    <property type="match status" value="1"/>
</dbReference>
<dbReference type="SUPFAM" id="SSF52374">
    <property type="entry name" value="Nucleotidylyl transferase"/>
    <property type="match status" value="1"/>
</dbReference>
<dbReference type="PROSITE" id="PS00178">
    <property type="entry name" value="AA_TRNA_LIGASE_I"/>
    <property type="match status" value="1"/>
</dbReference>
<dbReference type="PROSITE" id="PS50889">
    <property type="entry name" value="S4"/>
    <property type="match status" value="1"/>
</dbReference>
<feature type="chain" id="PRO_1000189306" description="Tyrosine--tRNA ligase">
    <location>
        <begin position="1"/>
        <end position="415"/>
    </location>
</feature>
<feature type="domain" description="S4 RNA-binding" evidence="1">
    <location>
        <begin position="348"/>
        <end position="415"/>
    </location>
</feature>
<feature type="short sequence motif" description="'HIGH' region">
    <location>
        <begin position="39"/>
        <end position="48"/>
    </location>
</feature>
<feature type="short sequence motif" description="'KMSKS' region">
    <location>
        <begin position="226"/>
        <end position="230"/>
    </location>
</feature>
<feature type="binding site" evidence="1">
    <location>
        <position position="34"/>
    </location>
    <ligand>
        <name>L-tyrosine</name>
        <dbReference type="ChEBI" id="CHEBI:58315"/>
    </ligand>
</feature>
<feature type="binding site" evidence="1">
    <location>
        <position position="164"/>
    </location>
    <ligand>
        <name>L-tyrosine</name>
        <dbReference type="ChEBI" id="CHEBI:58315"/>
    </ligand>
</feature>
<feature type="binding site" evidence="1">
    <location>
        <position position="168"/>
    </location>
    <ligand>
        <name>L-tyrosine</name>
        <dbReference type="ChEBI" id="CHEBI:58315"/>
    </ligand>
</feature>
<feature type="binding site" evidence="1">
    <location>
        <position position="229"/>
    </location>
    <ligand>
        <name>ATP</name>
        <dbReference type="ChEBI" id="CHEBI:30616"/>
    </ligand>
</feature>
<sequence>MNFIEDLKWRGALNQVTDEAGLIEAMASGEIGAYVGTDPTADSLHLGHLIPFMVLKRFQNAGGKAVIIIGGATGAIGDPRPTTERQLLSPEQLRQNEKGITEQVTKLFGDEKTAIVNNNDWLGKLTLTDFLRDYGKLFSINVMLKKDVVASRLETGISFTEFTYQILQGIDYHELWRRHNVQLQIGGSDQWGNITSGIDLIHSIEGNNATAFGLTIPLMTDSSGKKFGKSEGNAIWLNPEKTSPYTFYQFWYNQSDEDVVKYLKYFTFLGVDEINNLEQEAKNNPGGRIAQKRLAQEVTKFVHGEQAVADAEKLSAALFSGDVANLSAADIADAFGGVPSFDITSEKKNVVDFLVDGEVEKSKRQAREDVTNGAITISGEKVTDVNFEIDPTKHYDGEFVLVRRGKKKYFLGKVK</sequence>
<protein>
    <recommendedName>
        <fullName evidence="1">Tyrosine--tRNA ligase</fullName>
        <ecNumber evidence="1">6.1.1.1</ecNumber>
    </recommendedName>
    <alternativeName>
        <fullName evidence="1">Tyrosyl-tRNA synthetase</fullName>
        <shortName evidence="1">TyrRS</shortName>
    </alternativeName>
</protein>
<name>SYY_LEUMM</name>
<reference key="1">
    <citation type="journal article" date="2006" name="Proc. Natl. Acad. Sci. U.S.A.">
        <title>Comparative genomics of the lactic acid bacteria.</title>
        <authorList>
            <person name="Makarova K.S."/>
            <person name="Slesarev A."/>
            <person name="Wolf Y.I."/>
            <person name="Sorokin A."/>
            <person name="Mirkin B."/>
            <person name="Koonin E.V."/>
            <person name="Pavlov A."/>
            <person name="Pavlova N."/>
            <person name="Karamychev V."/>
            <person name="Polouchine N."/>
            <person name="Shakhova V."/>
            <person name="Grigoriev I."/>
            <person name="Lou Y."/>
            <person name="Rohksar D."/>
            <person name="Lucas S."/>
            <person name="Huang K."/>
            <person name="Goodstein D.M."/>
            <person name="Hawkins T."/>
            <person name="Plengvidhya V."/>
            <person name="Welker D."/>
            <person name="Hughes J."/>
            <person name="Goh Y."/>
            <person name="Benson A."/>
            <person name="Baldwin K."/>
            <person name="Lee J.-H."/>
            <person name="Diaz-Muniz I."/>
            <person name="Dosti B."/>
            <person name="Smeianov V."/>
            <person name="Wechter W."/>
            <person name="Barabote R."/>
            <person name="Lorca G."/>
            <person name="Altermann E."/>
            <person name="Barrangou R."/>
            <person name="Ganesan B."/>
            <person name="Xie Y."/>
            <person name="Rawsthorne H."/>
            <person name="Tamir D."/>
            <person name="Parker C."/>
            <person name="Breidt F."/>
            <person name="Broadbent J.R."/>
            <person name="Hutkins R."/>
            <person name="O'Sullivan D."/>
            <person name="Steele J."/>
            <person name="Unlu G."/>
            <person name="Saier M.H. Jr."/>
            <person name="Klaenhammer T."/>
            <person name="Richardson P."/>
            <person name="Kozyavkin S."/>
            <person name="Weimer B.C."/>
            <person name="Mills D.A."/>
        </authorList>
    </citation>
    <scope>NUCLEOTIDE SEQUENCE [LARGE SCALE GENOMIC DNA]</scope>
    <source>
        <strain>ATCC 8293 / DSM 20343 / BCRC 11652 / CCM 1803 / JCM 6124 / NCDO 523 / NBRC 100496 / NCIMB 8023 / NCTC 12954 / NRRL B-1118 / 37Y</strain>
    </source>
</reference>
<gene>
    <name evidence="1" type="primary">tyrS</name>
    <name type="ordered locus">LEUM_2044</name>
</gene>
<comment type="function">
    <text evidence="1">Catalyzes the attachment of tyrosine to tRNA(Tyr) in a two-step reaction: tyrosine is first activated by ATP to form Tyr-AMP and then transferred to the acceptor end of tRNA(Tyr).</text>
</comment>
<comment type="catalytic activity">
    <reaction evidence="1">
        <text>tRNA(Tyr) + L-tyrosine + ATP = L-tyrosyl-tRNA(Tyr) + AMP + diphosphate + H(+)</text>
        <dbReference type="Rhea" id="RHEA:10220"/>
        <dbReference type="Rhea" id="RHEA-COMP:9706"/>
        <dbReference type="Rhea" id="RHEA-COMP:9707"/>
        <dbReference type="ChEBI" id="CHEBI:15378"/>
        <dbReference type="ChEBI" id="CHEBI:30616"/>
        <dbReference type="ChEBI" id="CHEBI:33019"/>
        <dbReference type="ChEBI" id="CHEBI:58315"/>
        <dbReference type="ChEBI" id="CHEBI:78442"/>
        <dbReference type="ChEBI" id="CHEBI:78536"/>
        <dbReference type="ChEBI" id="CHEBI:456215"/>
        <dbReference type="EC" id="6.1.1.1"/>
    </reaction>
</comment>
<comment type="subunit">
    <text evidence="1">Homodimer.</text>
</comment>
<comment type="subcellular location">
    <subcellularLocation>
        <location evidence="1">Cytoplasm</location>
    </subcellularLocation>
</comment>
<comment type="similarity">
    <text evidence="1">Belongs to the class-I aminoacyl-tRNA synthetase family. TyrS type 1 subfamily.</text>
</comment>
<accession>Q03UK8</accession>
<evidence type="ECO:0000255" key="1">
    <source>
        <dbReference type="HAMAP-Rule" id="MF_02006"/>
    </source>
</evidence>
<organism>
    <name type="scientific">Leuconostoc mesenteroides subsp. mesenteroides (strain ATCC 8293 / DSM 20343 / BCRC 11652 / CCM 1803 / JCM 6124 / NCDO 523 / NBRC 100496 / NCIMB 8023 / NCTC 12954 / NRRL B-1118 / 37Y)</name>
    <dbReference type="NCBI Taxonomy" id="203120"/>
    <lineage>
        <taxon>Bacteria</taxon>
        <taxon>Bacillati</taxon>
        <taxon>Bacillota</taxon>
        <taxon>Bacilli</taxon>
        <taxon>Lactobacillales</taxon>
        <taxon>Lactobacillaceae</taxon>
        <taxon>Leuconostoc</taxon>
    </lineage>
</organism>